<evidence type="ECO:0000255" key="1">
    <source>
        <dbReference type="HAMAP-Rule" id="MF_01402"/>
    </source>
</evidence>
<reference key="1">
    <citation type="journal article" date="2009" name="J. Bacteriol.">
        <title>The genome of Thermosipho africanus TCF52B: lateral genetic connections to the Firmicutes and Archaea.</title>
        <authorList>
            <person name="Nesboe C.L."/>
            <person name="Bapteste E."/>
            <person name="Curtis B."/>
            <person name="Dahle H."/>
            <person name="Lopez P."/>
            <person name="Macleod D."/>
            <person name="Dlutek M."/>
            <person name="Bowman S."/>
            <person name="Zhaxybayeva O."/>
            <person name="Birkeland N.-K."/>
            <person name="Doolittle W.F."/>
        </authorList>
    </citation>
    <scope>NUCLEOTIDE SEQUENCE [LARGE SCALE GENOMIC DNA]</scope>
    <source>
        <strain>TCF52B</strain>
    </source>
</reference>
<keyword id="KW-0324">Glycolysis</keyword>
<keyword id="KW-0413">Isomerase</keyword>
<keyword id="KW-1185">Reference proteome</keyword>
<sequence>MIDRQKVISELISPNTSKIVLLVMDGIGDIPNEEGLTPLQKANTPNLDALAKKSDLGQTIPVLPGITPGSGPGHLGLFGYDPLKYQIGRGILEALGINVEVGENDLVARGNFATIDGDIIVDRRAGRPSSEESAKVVEILNENIKEIEDVKITFYPGKEHRFVVKFTGEGLMDKLEDADPQKEGKPIKYTKALDESSKKSERIVNILLDKIKEVLKDQPKMNFALLRGFSKHPDMPKFGDVFKLKPAAVAVYPMYKGLAKLVGMEVVEAGQTIEDEFNTVKKLWNEYDFFYVHIKKTDSYGEDGNFDSKVKVIEEVDKFLPILLELNPDVLIVTGDHSTPCVMKGHSFHPVPLMIYAKNTRRGLSKLFNEFECARGSLGTIHAVDVMPLALAYAGRLEKYGA</sequence>
<dbReference type="EC" id="5.4.2.12" evidence="1"/>
<dbReference type="EMBL" id="CP001185">
    <property type="protein sequence ID" value="ACJ76161.1"/>
    <property type="molecule type" value="Genomic_DNA"/>
</dbReference>
<dbReference type="RefSeq" id="WP_012580374.1">
    <property type="nucleotide sequence ID" value="NC_011653.1"/>
</dbReference>
<dbReference type="SMR" id="B7IDT4"/>
<dbReference type="STRING" id="484019.THA_1725"/>
<dbReference type="KEGG" id="taf:THA_1725"/>
<dbReference type="eggNOG" id="COG3635">
    <property type="taxonomic scope" value="Bacteria"/>
</dbReference>
<dbReference type="HOGENOM" id="CLU_034906_2_0_0"/>
<dbReference type="OrthoDB" id="9804453at2"/>
<dbReference type="UniPathway" id="UPA00109">
    <property type="reaction ID" value="UER00186"/>
</dbReference>
<dbReference type="Proteomes" id="UP000002453">
    <property type="component" value="Chromosome"/>
</dbReference>
<dbReference type="GO" id="GO:0046872">
    <property type="term" value="F:metal ion binding"/>
    <property type="evidence" value="ECO:0007669"/>
    <property type="project" value="InterPro"/>
</dbReference>
<dbReference type="GO" id="GO:0004619">
    <property type="term" value="F:phosphoglycerate mutase activity"/>
    <property type="evidence" value="ECO:0007669"/>
    <property type="project" value="UniProtKB-EC"/>
</dbReference>
<dbReference type="GO" id="GO:0006096">
    <property type="term" value="P:glycolytic process"/>
    <property type="evidence" value="ECO:0007669"/>
    <property type="project" value="UniProtKB-UniRule"/>
</dbReference>
<dbReference type="CDD" id="cd16011">
    <property type="entry name" value="iPGM_like"/>
    <property type="match status" value="1"/>
</dbReference>
<dbReference type="Gene3D" id="3.40.720.10">
    <property type="entry name" value="Alkaline Phosphatase, subunit A"/>
    <property type="match status" value="2"/>
</dbReference>
<dbReference type="HAMAP" id="MF_01402_B">
    <property type="entry name" value="ApgM_B"/>
    <property type="match status" value="1"/>
</dbReference>
<dbReference type="InterPro" id="IPR017850">
    <property type="entry name" value="Alkaline_phosphatase_core_sf"/>
</dbReference>
<dbReference type="InterPro" id="IPR023665">
    <property type="entry name" value="ApgAM_prokaryotes"/>
</dbReference>
<dbReference type="InterPro" id="IPR006124">
    <property type="entry name" value="Metalloenzyme"/>
</dbReference>
<dbReference type="InterPro" id="IPR004456">
    <property type="entry name" value="Pglycerate_mutase_ApgM"/>
</dbReference>
<dbReference type="NCBIfam" id="TIGR00306">
    <property type="entry name" value="apgM"/>
    <property type="match status" value="1"/>
</dbReference>
<dbReference type="NCBIfam" id="NF003160">
    <property type="entry name" value="PRK04135.1"/>
    <property type="match status" value="1"/>
</dbReference>
<dbReference type="PANTHER" id="PTHR31209">
    <property type="entry name" value="COFACTOR-INDEPENDENT PHOSPHOGLYCERATE MUTASE"/>
    <property type="match status" value="1"/>
</dbReference>
<dbReference type="PANTHER" id="PTHR31209:SF0">
    <property type="entry name" value="METALLOENZYME DOMAIN-CONTAINING PROTEIN"/>
    <property type="match status" value="1"/>
</dbReference>
<dbReference type="Pfam" id="PF01676">
    <property type="entry name" value="Metalloenzyme"/>
    <property type="match status" value="1"/>
</dbReference>
<dbReference type="Pfam" id="PF10143">
    <property type="entry name" value="PhosphMutase"/>
    <property type="match status" value="1"/>
</dbReference>
<dbReference type="PIRSF" id="PIRSF006392">
    <property type="entry name" value="IPGAM_arch"/>
    <property type="match status" value="1"/>
</dbReference>
<dbReference type="SUPFAM" id="SSF53649">
    <property type="entry name" value="Alkaline phosphatase-like"/>
    <property type="match status" value="1"/>
</dbReference>
<protein>
    <recommendedName>
        <fullName evidence="1">Probable 2,3-bisphosphoglycerate-independent phosphoglycerate mutase</fullName>
        <shortName evidence="1">BPG-independent PGAM</shortName>
        <shortName evidence="1">Phosphoglyceromutase</shortName>
        <shortName evidence="1">aPGAM</shortName>
        <ecNumber evidence="1">5.4.2.12</ecNumber>
    </recommendedName>
</protein>
<accession>B7IDT4</accession>
<name>APGM_THEAB</name>
<proteinExistence type="inferred from homology"/>
<comment type="function">
    <text evidence="1">Catalyzes the interconversion of 2-phosphoglycerate and 3-phosphoglycerate.</text>
</comment>
<comment type="catalytic activity">
    <reaction evidence="1">
        <text>(2R)-2-phosphoglycerate = (2R)-3-phosphoglycerate</text>
        <dbReference type="Rhea" id="RHEA:15901"/>
        <dbReference type="ChEBI" id="CHEBI:58272"/>
        <dbReference type="ChEBI" id="CHEBI:58289"/>
        <dbReference type="EC" id="5.4.2.12"/>
    </reaction>
</comment>
<comment type="pathway">
    <text evidence="1">Carbohydrate degradation; glycolysis; pyruvate from D-glyceraldehyde 3-phosphate: step 3/5.</text>
</comment>
<comment type="similarity">
    <text evidence="1">Belongs to the BPG-independent phosphoglycerate mutase family. A-PGAM subfamily.</text>
</comment>
<organism>
    <name type="scientific">Thermosipho africanus (strain TCF52B)</name>
    <dbReference type="NCBI Taxonomy" id="484019"/>
    <lineage>
        <taxon>Bacteria</taxon>
        <taxon>Thermotogati</taxon>
        <taxon>Thermotogota</taxon>
        <taxon>Thermotogae</taxon>
        <taxon>Thermotogales</taxon>
        <taxon>Fervidobacteriaceae</taxon>
        <taxon>Thermosipho</taxon>
    </lineage>
</organism>
<gene>
    <name evidence="1" type="primary">apgM</name>
    <name type="ordered locus">THA_1725</name>
</gene>
<feature type="chain" id="PRO_1000145451" description="Probable 2,3-bisphosphoglycerate-independent phosphoglycerate mutase">
    <location>
        <begin position="1"/>
        <end position="402"/>
    </location>
</feature>